<organism>
    <name type="scientific">Pseudomonas sp. (strain NK87)</name>
    <dbReference type="NCBI Taxonomy" id="314"/>
    <lineage>
        <taxon>Bacteria</taxon>
        <taxon>Pseudomonadati</taxon>
        <taxon>Pseudomonadota</taxon>
    </lineage>
</organism>
<gene>
    <name type="primary">nylA</name>
</gene>
<name>NYLA_PSES8</name>
<reference key="1">
    <citation type="journal article" date="1989" name="J. Bacteriol.">
        <title>High homology between 6-aminohexanoate-cyclic-dimer hydrolases of Flavobacterium and Pseudomonas strains.</title>
        <authorList>
            <person name="Tsuchiya K."/>
            <person name="Fukuyama S."/>
            <person name="Kanzaki N."/>
            <person name="Kanagawa K."/>
            <person name="Negoro S."/>
            <person name="Okada H."/>
        </authorList>
    </citation>
    <scope>NUCLEOTIDE SEQUENCE [GENOMIC DNA]</scope>
</reference>
<protein>
    <recommendedName>
        <fullName>6-aminohexanoate-cyclic-dimer hydrolase</fullName>
        <ecNumber>3.5.2.12</ecNumber>
    </recommendedName>
    <alternativeName>
        <fullName>Nylon oligomers-degrading enzyme EI</fullName>
    </alternativeName>
</protein>
<accession>P13397</accession>
<keyword id="KW-0378">Hydrolase</keyword>
<keyword id="KW-0549">Nylon degradation</keyword>
<keyword id="KW-0614">Plasmid</keyword>
<sequence length="493" mass="52240">MSKVDLWQDATAQAELVRSGEISRTELLEATIAHVQAVNPEINAVIIPLFEKARRESELASGPFAGVPYLLKDLTVVSQGDINTSSIKGMKESGYRADHDAYFVQRMRAAGFVLLGKVNTPEMGTQVTTEPEAWGATRNPWNLGRSVGGSSGGSGAAVAAALSPVAHGNDAAGSVRIPASVCGVVGLKPTRGRISPGPLVTDSDNVAGAAHEGLFARSVRDIAALLDVVSGHRPGDTFCAPTASRPYAQGISENPGSLRVGVLTHNPVGDFALDPECAAAARGAAAALAALGHDVNDAYPEALGDRSFLKDYLTICDVAIAREIERNGELIGRPLTEDDVEWTSWEMVKRADQVTGRAFAACVDELRYYAGKVERWWEAGWDLLILPTVTRQTPEIGELMLAKGTDLEGRHTALISGSLRMLAFTVPFNVSGQPAISLPIGMSSDGMPIGVQIVAAYGREDLLLQVAAQLEGALPWVARRPQLLNPSRKIPAA</sequence>
<proteinExistence type="inferred from homology"/>
<comment type="function">
    <text evidence="1">Catalyzes the hydrolysis of 6-aminohexanoic acid cyclic dimer (1,8-diazacyclotetradecane-2,9-dione) to form the linear dimer 6-aminohexanoyl-6-aminohexanoic acid.</text>
</comment>
<comment type="catalytic activity">
    <reaction>
        <text>1,8-diazacyclotetradecane-2,9-dione + H2O = N-(6-aminohexanoyl)-6-aminohexanoate</text>
        <dbReference type="Rhea" id="RHEA:16225"/>
        <dbReference type="ChEBI" id="CHEBI:15377"/>
        <dbReference type="ChEBI" id="CHEBI:16968"/>
        <dbReference type="ChEBI" id="CHEBI:58798"/>
        <dbReference type="EC" id="3.5.2.12"/>
    </reaction>
</comment>
<comment type="pathway">
    <text>Xenobiotic degradation; nylon-6 oligomer degradation.</text>
</comment>
<comment type="subunit">
    <text evidence="1">Homodimer.</text>
</comment>
<comment type="similarity">
    <text evidence="2">Belongs to the amidase family.</text>
</comment>
<evidence type="ECO:0000250" key="1"/>
<evidence type="ECO:0000305" key="2"/>
<dbReference type="EC" id="3.5.2.12"/>
<dbReference type="EMBL" id="M26952">
    <property type="protein sequence ID" value="AAA25908.1"/>
    <property type="molecule type" value="Genomic_DNA"/>
</dbReference>
<dbReference type="SMR" id="P13397"/>
<dbReference type="UniPathway" id="UPA00207"/>
<dbReference type="GO" id="GO:0019874">
    <property type="term" value="F:6-aminohexanoate-cyclic-dimer hydrolase activity"/>
    <property type="evidence" value="ECO:0007669"/>
    <property type="project" value="UniProtKB-EC"/>
</dbReference>
<dbReference type="GO" id="GO:0019876">
    <property type="term" value="P:nylon catabolic process"/>
    <property type="evidence" value="ECO:0007669"/>
    <property type="project" value="UniProtKB-KW"/>
</dbReference>
<dbReference type="Gene3D" id="3.90.1300.10">
    <property type="entry name" value="Amidase signature (AS) domain"/>
    <property type="match status" value="1"/>
</dbReference>
<dbReference type="InterPro" id="IPR000120">
    <property type="entry name" value="Amidase"/>
</dbReference>
<dbReference type="InterPro" id="IPR020556">
    <property type="entry name" value="Amidase_CS"/>
</dbReference>
<dbReference type="InterPro" id="IPR023631">
    <property type="entry name" value="Amidase_dom"/>
</dbReference>
<dbReference type="InterPro" id="IPR036928">
    <property type="entry name" value="AS_sf"/>
</dbReference>
<dbReference type="PANTHER" id="PTHR11895:SF7">
    <property type="entry name" value="GLUTAMYL-TRNA(GLN) AMIDOTRANSFERASE SUBUNIT A, MITOCHONDRIAL"/>
    <property type="match status" value="1"/>
</dbReference>
<dbReference type="PANTHER" id="PTHR11895">
    <property type="entry name" value="TRANSAMIDASE"/>
    <property type="match status" value="1"/>
</dbReference>
<dbReference type="Pfam" id="PF01425">
    <property type="entry name" value="Amidase"/>
    <property type="match status" value="1"/>
</dbReference>
<dbReference type="SUPFAM" id="SSF75304">
    <property type="entry name" value="Amidase signature (AS) enzymes"/>
    <property type="match status" value="1"/>
</dbReference>
<dbReference type="PROSITE" id="PS00571">
    <property type="entry name" value="AMIDASES"/>
    <property type="match status" value="1"/>
</dbReference>
<geneLocation type="plasmid"/>
<feature type="initiator methionine" description="Removed" evidence="1">
    <location>
        <position position="1"/>
    </location>
</feature>
<feature type="chain" id="PRO_0000105251" description="6-aminohexanoate-cyclic-dimer hydrolase">
    <location>
        <begin position="2"/>
        <end position="493"/>
    </location>
</feature>
<feature type="active site" description="Charge relay system" evidence="1">
    <location>
        <position position="72"/>
    </location>
</feature>
<feature type="active site" description="Charge relay system" evidence="1">
    <location>
        <position position="150"/>
    </location>
</feature>
<feature type="active site" description="Acyl-ester intermediate" evidence="1">
    <location>
        <position position="174"/>
    </location>
</feature>